<name>YPHG_ECOLI</name>
<protein>
    <recommendedName>
        <fullName>Uncharacterized protein YphG</fullName>
    </recommendedName>
</protein>
<proteinExistence type="predicted"/>
<accession>P76585</accession>
<accession>Q2MAH5</accession>
<keyword id="KW-1185">Reference proteome</keyword>
<feature type="chain" id="PRO_0000169260" description="Uncharacterized protein YphG">
    <location>
        <begin position="1"/>
        <end position="1093"/>
    </location>
</feature>
<dbReference type="EMBL" id="U00096">
    <property type="protein sequence ID" value="AAC75602.2"/>
    <property type="molecule type" value="Genomic_DNA"/>
</dbReference>
<dbReference type="EMBL" id="AP009048">
    <property type="protein sequence ID" value="BAE76731.1"/>
    <property type="molecule type" value="Genomic_DNA"/>
</dbReference>
<dbReference type="PIR" id="D65032">
    <property type="entry name" value="D65032"/>
</dbReference>
<dbReference type="RefSeq" id="NP_417044.4">
    <property type="nucleotide sequence ID" value="NC_000913.3"/>
</dbReference>
<dbReference type="RefSeq" id="WP_001333903.1">
    <property type="nucleotide sequence ID" value="NZ_LN832404.1"/>
</dbReference>
<dbReference type="SMR" id="P76585"/>
<dbReference type="BioGRID" id="4261313">
    <property type="interactions" value="12"/>
</dbReference>
<dbReference type="DIP" id="DIP-12832N"/>
<dbReference type="FunCoup" id="P76585">
    <property type="interactions" value="57"/>
</dbReference>
<dbReference type="STRING" id="511145.b2549"/>
<dbReference type="PaxDb" id="511145-b2549"/>
<dbReference type="EnsemblBacteria" id="AAC75602">
    <property type="protein sequence ID" value="AAC75602"/>
    <property type="gene ID" value="b2549"/>
</dbReference>
<dbReference type="GeneID" id="947021"/>
<dbReference type="KEGG" id="ecj:JW5405"/>
<dbReference type="KEGG" id="eco:b2549"/>
<dbReference type="KEGG" id="ecoc:C3026_14115"/>
<dbReference type="PATRIC" id="fig|511145.12.peg.2650"/>
<dbReference type="EchoBASE" id="EB3241"/>
<dbReference type="eggNOG" id="COG0457">
    <property type="taxonomic scope" value="Bacteria"/>
</dbReference>
<dbReference type="HOGENOM" id="CLU_010402_0_0_6"/>
<dbReference type="InParanoid" id="P76585"/>
<dbReference type="OMA" id="QWTWGNG"/>
<dbReference type="OrthoDB" id="174931at2"/>
<dbReference type="PhylomeDB" id="P76585"/>
<dbReference type="BioCyc" id="EcoCyc:G7343-MONOMER"/>
<dbReference type="PRO" id="PR:P76585"/>
<dbReference type="Proteomes" id="UP000000625">
    <property type="component" value="Chromosome"/>
</dbReference>
<dbReference type="GO" id="GO:0030246">
    <property type="term" value="F:carbohydrate binding"/>
    <property type="evidence" value="ECO:0007669"/>
    <property type="project" value="InterPro"/>
</dbReference>
<dbReference type="Gene3D" id="2.70.98.10">
    <property type="match status" value="1"/>
</dbReference>
<dbReference type="Gene3D" id="1.25.40.10">
    <property type="entry name" value="Tetratricopeptide repeat domain"/>
    <property type="match status" value="2"/>
</dbReference>
<dbReference type="InterPro" id="IPR033396">
    <property type="entry name" value="DUF5107"/>
</dbReference>
<dbReference type="InterPro" id="IPR014718">
    <property type="entry name" value="GH-type_carb-bd"/>
</dbReference>
<dbReference type="InterPro" id="IPR011990">
    <property type="entry name" value="TPR-like_helical_dom_sf"/>
</dbReference>
<dbReference type="InterPro" id="IPR019734">
    <property type="entry name" value="TPR_rpt"/>
</dbReference>
<dbReference type="PANTHER" id="PTHR12558">
    <property type="entry name" value="CELL DIVISION CYCLE 16,23,27"/>
    <property type="match status" value="1"/>
</dbReference>
<dbReference type="PANTHER" id="PTHR12558:SF13">
    <property type="entry name" value="CELL DIVISION CYCLE PROTEIN 27 HOMOLOG"/>
    <property type="match status" value="1"/>
</dbReference>
<dbReference type="Pfam" id="PF17128">
    <property type="entry name" value="DUF5107"/>
    <property type="match status" value="1"/>
</dbReference>
<dbReference type="Pfam" id="PF13432">
    <property type="entry name" value="TPR_16"/>
    <property type="match status" value="2"/>
</dbReference>
<dbReference type="SMART" id="SM00028">
    <property type="entry name" value="TPR"/>
    <property type="match status" value="5"/>
</dbReference>
<dbReference type="SUPFAM" id="SSF48452">
    <property type="entry name" value="TPR-like"/>
    <property type="match status" value="3"/>
</dbReference>
<dbReference type="PROSITE" id="PS50293">
    <property type="entry name" value="TPR_REGION"/>
    <property type="match status" value="2"/>
</dbReference>
<organism>
    <name type="scientific">Escherichia coli (strain K12)</name>
    <dbReference type="NCBI Taxonomy" id="83333"/>
    <lineage>
        <taxon>Bacteria</taxon>
        <taxon>Pseudomonadati</taxon>
        <taxon>Pseudomonadota</taxon>
        <taxon>Gammaproteobacteria</taxon>
        <taxon>Enterobacterales</taxon>
        <taxon>Enterobacteriaceae</taxon>
        <taxon>Escherichia</taxon>
    </lineage>
</organism>
<sequence length="1093" mass="123832">MTPVKVWQERVEIPTYETGPQDIHPMFLENRVYQGSSGAVYPYGVTDTLSEQKTLKSWQAVWLENDYIKVMILPELGGRVHRAWDKVKQRDFVYHNEVIKPALVGLLGPWISGGIEFNWPQHHRPTTFMPVDFTLEAHEDGAQTVWVGETEPMHGLQVMTGFTLRPDRAALEIASRVYNGNATPRHFLWWANPAVKGGEGHQSVFPPDVTAVFDHGKRAVSAFPIATGTYYKVDYSAGVDISRYKNVPVPTSYMAEKSQYDFVGAWCHDEDGGLLHVANHHIAPGKKQWSWGHSEFGQAWDKSLTDNNGPYIELMTGIFADNQPDFTWLDAYEEKRFEQYFLPYHSLGMVQNASRDAVIKLQRSKRGIEWGLYAISPLNGYRLAIREIGKCNALLDDAVALMPATAIQGVLHGINPERLTIELSDADGNIVLSYQEHQPQALPLPDVAKAPLAAQDITSTDEAWFIGQHLEQYHHASRSPFDYYLRGVALDPLDYRCNLALAMLEYNRADFPQAVAYATQALKRAHALNKNPQCGQASLIRASAYERQGQYQQAEEDFWRAVWSGNSKAGGYYGLARLAARNGNFDAGLDFCQQSLRACPTNQEVLCLHNLLLVLSGRQDNARVQREKLLRDYPLNATLWWLNWFDGRSESALAQWRGLCQGRDVNALMTAGQLINWGMPTLAAEMLNALDCQRTLPLYLQASLLPKAERGELVAKAIDVFPQFVRFPNTLEEVAALESIEECWFARHLLACFYYNKRSYNKAIAFWQRCVEMSPEFADGWRGLAIHAWNKQHDYELAARYLDNAYQLAPQDARLLFERDLLDKLSGATPEKRLARLENNLEIALKRDDMTAELLNLWHLTGQADKAADILATRKFHPWEGGEGKVTSQFILNQLLRAWQHLDARQPQQACELLHAALHYPENLSEGRLPGQTDNDIWFWQAICANAQGDETEATRCLRLAATGDRTINIHSYYNDQPVDYLFWQGMALRLLGEQQTAQQLFSEMKQWAQEMAKTSIEADFFAVSQPDLLSLYGDLQQQHKEKCLMVAMLASAGLGEVAQYESARAELTAINPAWPKAALFTTVMPFIFNRVH</sequence>
<reference key="1">
    <citation type="journal article" date="1997" name="Science">
        <title>The complete genome sequence of Escherichia coli K-12.</title>
        <authorList>
            <person name="Blattner F.R."/>
            <person name="Plunkett G. III"/>
            <person name="Bloch C.A."/>
            <person name="Perna N.T."/>
            <person name="Burland V."/>
            <person name="Riley M."/>
            <person name="Collado-Vides J."/>
            <person name="Glasner J.D."/>
            <person name="Rode C.K."/>
            <person name="Mayhew G.F."/>
            <person name="Gregor J."/>
            <person name="Davis N.W."/>
            <person name="Kirkpatrick H.A."/>
            <person name="Goeden M.A."/>
            <person name="Rose D.J."/>
            <person name="Mau B."/>
            <person name="Shao Y."/>
        </authorList>
    </citation>
    <scope>NUCLEOTIDE SEQUENCE [LARGE SCALE GENOMIC DNA]</scope>
    <source>
        <strain>K12 / MG1655 / ATCC 47076</strain>
    </source>
</reference>
<reference key="2">
    <citation type="journal article" date="2006" name="Mol. Syst. Biol.">
        <title>Highly accurate genome sequences of Escherichia coli K-12 strains MG1655 and W3110.</title>
        <authorList>
            <person name="Hayashi K."/>
            <person name="Morooka N."/>
            <person name="Yamamoto Y."/>
            <person name="Fujita K."/>
            <person name="Isono K."/>
            <person name="Choi S."/>
            <person name="Ohtsubo E."/>
            <person name="Baba T."/>
            <person name="Wanner B.L."/>
            <person name="Mori H."/>
            <person name="Horiuchi T."/>
        </authorList>
    </citation>
    <scope>NUCLEOTIDE SEQUENCE [LARGE SCALE GENOMIC DNA]</scope>
    <source>
        <strain>K12 / W3110 / ATCC 27325 / DSM 5911</strain>
    </source>
</reference>
<gene>
    <name type="primary">yphG</name>
    <name type="ordered locus">b2549</name>
    <name type="ordered locus">JW5405</name>
</gene>